<organism>
    <name type="scientific">Caldanaerobacter subterraneus subsp. tengcongensis (strain DSM 15242 / JCM 11007 / NBRC 100824 / MB4)</name>
    <name type="common">Thermoanaerobacter tengcongensis</name>
    <dbReference type="NCBI Taxonomy" id="273068"/>
    <lineage>
        <taxon>Bacteria</taxon>
        <taxon>Bacillati</taxon>
        <taxon>Bacillota</taxon>
        <taxon>Clostridia</taxon>
        <taxon>Thermoanaerobacterales</taxon>
        <taxon>Thermoanaerobacteraceae</taxon>
        <taxon>Caldanaerobacter</taxon>
    </lineage>
</organism>
<sequence>MDKTFHLEVLTPYRKFYEGDVEEIIVTTTTGQIGILKDHIPLTTPIAQAGTLQIKKDGQWKEAFISGGFMEVRRDGVTILSSAAEWPEEIDIARAQAAKERAEEKLRQKKSKQEYIAAEAALKRALMRLKIASKYQEM</sequence>
<gene>
    <name evidence="1" type="primary">atpC</name>
    <name type="ordered locus">TTE0638</name>
</gene>
<dbReference type="EMBL" id="AE008691">
    <property type="protein sequence ID" value="AAM23906.1"/>
    <property type="molecule type" value="Genomic_DNA"/>
</dbReference>
<dbReference type="RefSeq" id="WP_011025048.1">
    <property type="nucleotide sequence ID" value="NC_003869.1"/>
</dbReference>
<dbReference type="SMR" id="Q8RC14"/>
<dbReference type="STRING" id="273068.TTE0638"/>
<dbReference type="KEGG" id="tte:TTE0638"/>
<dbReference type="eggNOG" id="COG0355">
    <property type="taxonomic scope" value="Bacteria"/>
</dbReference>
<dbReference type="HOGENOM" id="CLU_084338_1_3_9"/>
<dbReference type="OrthoDB" id="9804110at2"/>
<dbReference type="Proteomes" id="UP000000555">
    <property type="component" value="Chromosome"/>
</dbReference>
<dbReference type="GO" id="GO:0005886">
    <property type="term" value="C:plasma membrane"/>
    <property type="evidence" value="ECO:0007669"/>
    <property type="project" value="UniProtKB-SubCell"/>
</dbReference>
<dbReference type="GO" id="GO:0045259">
    <property type="term" value="C:proton-transporting ATP synthase complex"/>
    <property type="evidence" value="ECO:0007669"/>
    <property type="project" value="UniProtKB-KW"/>
</dbReference>
<dbReference type="GO" id="GO:0005524">
    <property type="term" value="F:ATP binding"/>
    <property type="evidence" value="ECO:0007669"/>
    <property type="project" value="UniProtKB-UniRule"/>
</dbReference>
<dbReference type="GO" id="GO:0046933">
    <property type="term" value="F:proton-transporting ATP synthase activity, rotational mechanism"/>
    <property type="evidence" value="ECO:0007669"/>
    <property type="project" value="UniProtKB-UniRule"/>
</dbReference>
<dbReference type="CDD" id="cd12152">
    <property type="entry name" value="F1-ATPase_delta"/>
    <property type="match status" value="1"/>
</dbReference>
<dbReference type="Gene3D" id="1.20.5.440">
    <property type="entry name" value="ATP synthase delta/epsilon subunit, C-terminal domain"/>
    <property type="match status" value="1"/>
</dbReference>
<dbReference type="Gene3D" id="2.60.15.10">
    <property type="entry name" value="F0F1 ATP synthase delta/epsilon subunit, N-terminal"/>
    <property type="match status" value="1"/>
</dbReference>
<dbReference type="HAMAP" id="MF_00530">
    <property type="entry name" value="ATP_synth_epsil_bac"/>
    <property type="match status" value="1"/>
</dbReference>
<dbReference type="InterPro" id="IPR036794">
    <property type="entry name" value="ATP_F1_dsu/esu_C_sf"/>
</dbReference>
<dbReference type="InterPro" id="IPR001469">
    <property type="entry name" value="ATP_synth_F1_dsu/esu"/>
</dbReference>
<dbReference type="InterPro" id="IPR020546">
    <property type="entry name" value="ATP_synth_F1_dsu/esu_N"/>
</dbReference>
<dbReference type="InterPro" id="IPR020547">
    <property type="entry name" value="ATP_synth_F1_esu_C"/>
</dbReference>
<dbReference type="InterPro" id="IPR036771">
    <property type="entry name" value="ATPsynth_dsu/esu_N"/>
</dbReference>
<dbReference type="NCBIfam" id="TIGR01216">
    <property type="entry name" value="ATP_synt_epsi"/>
    <property type="match status" value="1"/>
</dbReference>
<dbReference type="NCBIfam" id="NF009980">
    <property type="entry name" value="PRK13446.1"/>
    <property type="match status" value="1"/>
</dbReference>
<dbReference type="PANTHER" id="PTHR13822">
    <property type="entry name" value="ATP SYNTHASE DELTA/EPSILON CHAIN"/>
    <property type="match status" value="1"/>
</dbReference>
<dbReference type="PANTHER" id="PTHR13822:SF10">
    <property type="entry name" value="ATP SYNTHASE EPSILON CHAIN, CHLOROPLASTIC"/>
    <property type="match status" value="1"/>
</dbReference>
<dbReference type="Pfam" id="PF00401">
    <property type="entry name" value="ATP-synt_DE"/>
    <property type="match status" value="1"/>
</dbReference>
<dbReference type="Pfam" id="PF02823">
    <property type="entry name" value="ATP-synt_DE_N"/>
    <property type="match status" value="1"/>
</dbReference>
<dbReference type="SUPFAM" id="SSF46604">
    <property type="entry name" value="Epsilon subunit of F1F0-ATP synthase C-terminal domain"/>
    <property type="match status" value="1"/>
</dbReference>
<dbReference type="SUPFAM" id="SSF51344">
    <property type="entry name" value="Epsilon subunit of F1F0-ATP synthase N-terminal domain"/>
    <property type="match status" value="1"/>
</dbReference>
<feature type="chain" id="PRO_0000188232" description="ATP synthase epsilon chain">
    <location>
        <begin position="1"/>
        <end position="138"/>
    </location>
</feature>
<protein>
    <recommendedName>
        <fullName evidence="1">ATP synthase epsilon chain</fullName>
    </recommendedName>
    <alternativeName>
        <fullName evidence="1">ATP synthase F1 sector epsilon subunit</fullName>
    </alternativeName>
    <alternativeName>
        <fullName evidence="1">F-ATPase epsilon subunit</fullName>
    </alternativeName>
</protein>
<name>ATPE_CALS4</name>
<keyword id="KW-0066">ATP synthesis</keyword>
<keyword id="KW-1003">Cell membrane</keyword>
<keyword id="KW-0139">CF(1)</keyword>
<keyword id="KW-0375">Hydrogen ion transport</keyword>
<keyword id="KW-0406">Ion transport</keyword>
<keyword id="KW-0472">Membrane</keyword>
<keyword id="KW-1185">Reference proteome</keyword>
<keyword id="KW-0813">Transport</keyword>
<proteinExistence type="inferred from homology"/>
<accession>Q8RC14</accession>
<reference key="1">
    <citation type="journal article" date="2002" name="Genome Res.">
        <title>A complete sequence of the T. tengcongensis genome.</title>
        <authorList>
            <person name="Bao Q."/>
            <person name="Tian Y."/>
            <person name="Li W."/>
            <person name="Xu Z."/>
            <person name="Xuan Z."/>
            <person name="Hu S."/>
            <person name="Dong W."/>
            <person name="Yang J."/>
            <person name="Chen Y."/>
            <person name="Xue Y."/>
            <person name="Xu Y."/>
            <person name="Lai X."/>
            <person name="Huang L."/>
            <person name="Dong X."/>
            <person name="Ma Y."/>
            <person name="Ling L."/>
            <person name="Tan H."/>
            <person name="Chen R."/>
            <person name="Wang J."/>
            <person name="Yu J."/>
            <person name="Yang H."/>
        </authorList>
    </citation>
    <scope>NUCLEOTIDE SEQUENCE [LARGE SCALE GENOMIC DNA]</scope>
    <source>
        <strain>DSM 15242 / JCM 11007 / NBRC 100824 / MB4</strain>
    </source>
</reference>
<evidence type="ECO:0000255" key="1">
    <source>
        <dbReference type="HAMAP-Rule" id="MF_00530"/>
    </source>
</evidence>
<comment type="function">
    <text evidence="1">Produces ATP from ADP in the presence of a proton gradient across the membrane.</text>
</comment>
<comment type="subunit">
    <text>F-type ATPases have 2 components, CF(1) - the catalytic core - and CF(0) - the membrane proton channel. CF(1) has five subunits: alpha(3), beta(3), gamma(1), delta(1), epsilon(1). CF(0) has three main subunits: a, b and c.</text>
</comment>
<comment type="subcellular location">
    <subcellularLocation>
        <location evidence="1">Cell membrane</location>
        <topology evidence="1">Peripheral membrane protein</topology>
    </subcellularLocation>
</comment>
<comment type="similarity">
    <text evidence="1">Belongs to the ATPase epsilon chain family.</text>
</comment>